<accession>P61937</accession>
<accession>D9PXE6</accession>
<accession>P95294</accession>
<proteinExistence type="evidence at protein level"/>
<organism>
    <name type="scientific">Methanothermobacter marburgensis (strain ATCC BAA-927 / DSM 2133 / JCM 14651 / NBRC 100331 / OCM 82 / Marburg)</name>
    <name type="common">Methanobacterium thermoautotrophicum</name>
    <dbReference type="NCBI Taxonomy" id="79929"/>
    <lineage>
        <taxon>Archaea</taxon>
        <taxon>Methanobacteriati</taxon>
        <taxon>Methanobacteriota</taxon>
        <taxon>Methanomada group</taxon>
        <taxon>Methanobacteria</taxon>
        <taxon>Methanobacteriales</taxon>
        <taxon>Methanobacteriaceae</taxon>
        <taxon>Methanothermobacter</taxon>
    </lineage>
</organism>
<gene>
    <name type="primary">fmdC</name>
    <name type="ordered locus">MTBMA_c13060</name>
</gene>
<reference key="1">
    <citation type="journal article" date="1996" name="Eur. J. Biochem.">
        <title>The molybdenum formylmethanofuran dehydrogenase operon and the tungsten formylmethanofuran dehydrogenase operon from Methanobacterium thermoautotrophicum. Structures and transcriptional regulation.</title>
        <authorList>
            <person name="Hochheimer A."/>
            <person name="Linder D."/>
            <person name="Thauer R.K."/>
            <person name="Hedderich R."/>
        </authorList>
    </citation>
    <scope>NUCLEOTIDE SEQUENCE [GENOMIC DNA]</scope>
    <scope>PROTEIN SEQUENCE OF 242-253; 275-290 AND 372-398</scope>
    <source>
        <strain>ATCC BAA-927 / DSM 2133 / JCM 14651 / NBRC 100331 / OCM 82 / Marburg</strain>
    </source>
</reference>
<reference key="2">
    <citation type="journal article" date="2010" name="J. Bacteriol.">
        <title>Complete genome sequence of Methanothermobacter marburgensis, a methanoarchaeon model organism.</title>
        <authorList>
            <person name="Liesegang H."/>
            <person name="Kaster A.K."/>
            <person name="Wiezer A."/>
            <person name="Goenrich M."/>
            <person name="Wollherr A."/>
            <person name="Seedorf H."/>
            <person name="Gottschalk G."/>
            <person name="Thauer R.K."/>
        </authorList>
    </citation>
    <scope>NUCLEOTIDE SEQUENCE [LARGE SCALE GENOMIC DNA]</scope>
    <source>
        <strain>ATCC BAA-927 / DSM 2133 / JCM 14651 / NBRC 100331 / OCM 82 / Marburg</strain>
    </source>
</reference>
<reference key="3">
    <citation type="journal article" date="1995" name="Eur. J. Biochem.">
        <title>The tungsten formylmethanofuran dehydrogenase from Methanobacterium thermoautotrophicum contains sequence motifs characteristic for enzymes containing molybdopterin dinucleotide.</title>
        <authorList>
            <person name="Hochheimer A."/>
            <person name="Schmitz R.A."/>
            <person name="Thauer R.K."/>
            <person name="Hedderich R."/>
        </authorList>
    </citation>
    <scope>PROTEIN SEQUENCE OF 2-18</scope>
    <source>
        <strain>ATCC BAA-927 / DSM 2133 / JCM 14651 / NBRC 100331 / OCM 82 / Marburg</strain>
    </source>
</reference>
<sequence>MGFVLVPKSDFQIPLEADTIRPDLFEGLDLDEIRSLQVYEGNIKRPLGEFFEIAETSHEDQLIRIDGDVSRVKYIGSGMKSGKIIINGDVGLQLGCEMKGGEIEVNGNVSSWIGMEMHGGTIKINGNAGDYVGCAYRGEWRGMKGGKIIIQGNAGNNIGGGMMAGEIYIGGDAGNFCGIRMNGGEITVRGDAGRAPGAEMVSGIIKIHGRISSLLPGFKEISTFKEDGSLMILFKGDLSEKNPEGNLYINYNKNLHILENETDEGRVITKKGIKVIYNSGSTIREGQIIKGGNKLTDDYIDECARCCISPEDYKLLGEPENVVVSSHGNEVVLRAVEDPGIQMGTIFIPRGIWANVLTPPYTESTGSPMYKGVPVYLRKASQGERILSAEELVEEYGVGK</sequence>
<protein>
    <recommendedName>
        <fullName>Molybdenum-containing formylmethanofuran dehydrogenase 1 subunit C</fullName>
        <ecNumber evidence="1">1.2.7.12</ecNumber>
    </recommendedName>
    <alternativeName>
        <fullName>Molybdenum-containing formylmethanofuran dehydrogenase I subunit C</fullName>
    </alternativeName>
</protein>
<evidence type="ECO:0000250" key="1">
    <source>
        <dbReference type="UniProtKB" id="Q48943"/>
    </source>
</evidence>
<evidence type="ECO:0000305" key="2"/>
<name>FMDC_METTM</name>
<comment type="function">
    <text evidence="1">Catalyzes the reversible oxidation of CO(2) and methanofuran (MFR) to N-formylmethanofuran (CHO-MFR). Can only oxidize formylmethanofuran. This enzyme is oxygen-labile.</text>
</comment>
<comment type="catalytic activity">
    <reaction evidence="1">
        <text>N-formylmethanofuran + 2 oxidized [2Fe-2S]-[ferredoxin] + H2O = methanofuran + 2 reduced [2Fe-2S]-[ferredoxin] + CO2 + H(+)</text>
        <dbReference type="Rhea" id="RHEA:19841"/>
        <dbReference type="Rhea" id="RHEA-COMP:10000"/>
        <dbReference type="Rhea" id="RHEA-COMP:10001"/>
        <dbReference type="ChEBI" id="CHEBI:15377"/>
        <dbReference type="ChEBI" id="CHEBI:15378"/>
        <dbReference type="ChEBI" id="CHEBI:16526"/>
        <dbReference type="ChEBI" id="CHEBI:33737"/>
        <dbReference type="ChEBI" id="CHEBI:33738"/>
        <dbReference type="ChEBI" id="CHEBI:57727"/>
        <dbReference type="ChEBI" id="CHEBI:58151"/>
        <dbReference type="EC" id="1.2.7.12"/>
    </reaction>
</comment>
<comment type="activity regulation">
    <text>Inactivated by cyanide.</text>
</comment>
<comment type="pathway">
    <text>One-carbon metabolism; methanogenesis from CO(2); 5,10-methenyl-5,6,7,8-tetrahydromethanopterin from CO(2): step 1/3.</text>
</comment>
<comment type="subunit">
    <text>Consists of five subunits; FmdA, FmdB, FmdC, FmdD, and FmdE.</text>
</comment>
<comment type="induction">
    <text>By growth on molybdenum, under anaerobic conditions.</text>
</comment>
<comment type="similarity">
    <text evidence="2">In the N-terminal section; belongs to the FwdC/FmdC family.</text>
</comment>
<comment type="similarity">
    <text evidence="2">In the C-terminal section; belongs to the molybdenum dinucleotide binding protein family.</text>
</comment>
<feature type="chain" id="PRO_0000144191" description="Molybdenum-containing formylmethanofuran dehydrogenase 1 subunit C">
    <location>
        <begin position="1"/>
        <end position="400"/>
    </location>
</feature>
<feature type="repeat" description="1">
    <location>
        <begin position="76"/>
        <end position="88"/>
    </location>
</feature>
<feature type="repeat" description="2">
    <location>
        <begin position="95"/>
        <end position="107"/>
    </location>
</feature>
<feature type="repeat" description="3">
    <location>
        <begin position="114"/>
        <end position="126"/>
    </location>
</feature>
<feature type="repeat" description="4">
    <location>
        <begin position="140"/>
        <end position="152"/>
    </location>
</feature>
<feature type="repeat" description="5">
    <location>
        <begin position="159"/>
        <end position="171"/>
    </location>
</feature>
<feature type="repeat" description="6">
    <location>
        <begin position="178"/>
        <end position="190"/>
    </location>
</feature>
<feature type="repeat" description="7">
    <location>
        <begin position="197"/>
        <end position="209"/>
    </location>
</feature>
<feature type="region of interest" description="7 X 13 AA repeats of [GW]-X-X-M-X-X-G-X-I-X-[IV]-X-G">
    <location>
        <begin position="76"/>
        <end position="209"/>
    </location>
</feature>
<feature type="sequence conflict" description="In Ref. 3; AA sequence." evidence="2" ref="3">
    <original>P</original>
    <variation>G</variation>
    <location>
        <position position="14"/>
    </location>
</feature>
<feature type="sequence conflict" description="In Ref. 1; CAA66401." evidence="2" ref="1">
    <original>RPDLFEGL</original>
    <variation>DPICLKGW</variation>
    <location>
        <begin position="21"/>
        <end position="28"/>
    </location>
</feature>
<keyword id="KW-0903">Direct protein sequencing</keyword>
<keyword id="KW-0484">Methanogenesis</keyword>
<keyword id="KW-0560">Oxidoreductase</keyword>
<keyword id="KW-0677">Repeat</keyword>
<dbReference type="EC" id="1.2.7.12" evidence="1"/>
<dbReference type="EMBL" id="X97820">
    <property type="protein sequence ID" value="CAA66401.1"/>
    <property type="molecule type" value="Genomic_DNA"/>
</dbReference>
<dbReference type="EMBL" id="CP001710">
    <property type="protein sequence ID" value="ADL58894.1"/>
    <property type="molecule type" value="Genomic_DNA"/>
</dbReference>
<dbReference type="RefSeq" id="WP_013296115.1">
    <property type="nucleotide sequence ID" value="NC_014408.1"/>
</dbReference>
<dbReference type="SMR" id="P61937"/>
<dbReference type="STRING" id="79929.MTBMA_c13060"/>
<dbReference type="PaxDb" id="79929-MTBMA_c13060"/>
<dbReference type="GeneID" id="9705014"/>
<dbReference type="KEGG" id="mmg:MTBMA_c13060"/>
<dbReference type="PATRIC" id="fig|79929.8.peg.1270"/>
<dbReference type="HOGENOM" id="CLU_661592_0_0_2"/>
<dbReference type="OrthoDB" id="106216at2157"/>
<dbReference type="UniPathway" id="UPA00640">
    <property type="reaction ID" value="UER00692"/>
</dbReference>
<dbReference type="Proteomes" id="UP000000345">
    <property type="component" value="Chromosome"/>
</dbReference>
<dbReference type="GO" id="GO:0018493">
    <property type="term" value="F:formylmethanofuran dehydrogenase activity"/>
    <property type="evidence" value="ECO:0007669"/>
    <property type="project" value="UniProtKB-EC"/>
</dbReference>
<dbReference type="GO" id="GO:0030151">
    <property type="term" value="F:molybdenum ion binding"/>
    <property type="evidence" value="ECO:0007669"/>
    <property type="project" value="InterPro"/>
</dbReference>
<dbReference type="GO" id="GO:0043546">
    <property type="term" value="F:molybdopterin cofactor binding"/>
    <property type="evidence" value="ECO:0007669"/>
    <property type="project" value="InterPro"/>
</dbReference>
<dbReference type="GO" id="GO:0019386">
    <property type="term" value="P:methanogenesis, from carbon dioxide"/>
    <property type="evidence" value="ECO:0007669"/>
    <property type="project" value="UniProtKB-UniPathway"/>
</dbReference>
<dbReference type="CDD" id="cd00980">
    <property type="entry name" value="FwdC/FmdC"/>
    <property type="match status" value="1"/>
</dbReference>
<dbReference type="CDD" id="cd02789">
    <property type="entry name" value="MopB_CT_FmdC-FwdD"/>
    <property type="match status" value="1"/>
</dbReference>
<dbReference type="Gene3D" id="2.40.40.20">
    <property type="match status" value="1"/>
</dbReference>
<dbReference type="Gene3D" id="2.160.20.60">
    <property type="entry name" value="Glutamate synthase, alpha subunit, C-terminal domain"/>
    <property type="match status" value="1"/>
</dbReference>
<dbReference type="InterPro" id="IPR009010">
    <property type="entry name" value="Asp_de-COase-like_dom_sf"/>
</dbReference>
<dbReference type="InterPro" id="IPR041717">
    <property type="entry name" value="FmdC/FwdD_MopB-bd"/>
</dbReference>
<dbReference type="InterPro" id="IPR012048">
    <property type="entry name" value="Formylmethanofuran_DH_csu/dsu"/>
</dbReference>
<dbReference type="InterPro" id="IPR017550">
    <property type="entry name" value="Formylmethanofuran_DH_suC"/>
</dbReference>
<dbReference type="InterPro" id="IPR036485">
    <property type="entry name" value="Glu_synth_asu_C_sf"/>
</dbReference>
<dbReference type="InterPro" id="IPR006657">
    <property type="entry name" value="MoPterin_dinucl-bd_dom"/>
</dbReference>
<dbReference type="NCBIfam" id="TIGR03122">
    <property type="entry name" value="one_C_dehyd_C"/>
    <property type="match status" value="1"/>
</dbReference>
<dbReference type="PANTHER" id="PTHR39673">
    <property type="entry name" value="TUNGSTEN FORMYLMETHANOFURAN DEHYDROGENASE, SUBUNIT C (FWDC)"/>
    <property type="match status" value="1"/>
</dbReference>
<dbReference type="PANTHER" id="PTHR39673:SF5">
    <property type="entry name" value="TUNGSTEN-CONTAINING FORMYLMETHANOFURAN DEHYDROGENASE 2 SUBUNIT C"/>
    <property type="match status" value="1"/>
</dbReference>
<dbReference type="Pfam" id="PF01568">
    <property type="entry name" value="Molydop_binding"/>
    <property type="match status" value="1"/>
</dbReference>
<dbReference type="PIRSF" id="PIRSF036633">
    <property type="entry name" value="FmdC_D"/>
    <property type="match status" value="1"/>
</dbReference>
<dbReference type="SUPFAM" id="SSF50692">
    <property type="entry name" value="ADC-like"/>
    <property type="match status" value="1"/>
</dbReference>
<dbReference type="SUPFAM" id="SSF69336">
    <property type="entry name" value="Alpha subunit of glutamate synthase, C-terminal domain"/>
    <property type="match status" value="1"/>
</dbReference>